<comment type="function">
    <text evidence="1">May be involved in the reorganization of actin cytoskeleton mediated by RND1, RND2 and RND3. Promotes RHOA activation mediated by GNA12 and GNA13 (By similarity).</text>
</comment>
<comment type="subunit">
    <text evidence="1">Interacts with GNA12, GNA13, RND1, RND2 and RND3.</text>
</comment>
<comment type="interaction">
    <interactant intactId="EBI-746004">
        <id>Q5T124</id>
    </interactant>
    <interactant intactId="EBI-749051">
        <id>Q8IYR0</id>
        <label>CFAP206</label>
    </interactant>
    <organismsDiffer>false</organismsDiffer>
    <experiments>4</experiments>
</comment>
<comment type="interaction">
    <interactant intactId="EBI-746004">
        <id>Q5T124</id>
    </interactant>
    <interactant intactId="EBI-73440">
        <id>P06730</id>
        <label>EIF4E</label>
    </interactant>
    <organismsDiffer>false</organismsDiffer>
    <experiments>3</experiments>
</comment>
<comment type="interaction">
    <interactant intactId="EBI-746004">
        <id>Q5T124</id>
    </interactant>
    <interactant intactId="EBI-398610">
        <id>O60573</id>
        <label>EIF4E2</label>
    </interactant>
    <organismsDiffer>false</organismsDiffer>
    <experiments>3</experiments>
</comment>
<comment type="interaction">
    <interactant intactId="EBI-746004">
        <id>Q5T124</id>
    </interactant>
    <interactant intactId="EBI-744099">
        <id>Q9H0I2</id>
        <label>ENKD1</label>
    </interactant>
    <organismsDiffer>false</organismsDiffer>
    <experiments>3</experiments>
</comment>
<comment type="interaction">
    <interactant intactId="EBI-746004">
        <id>Q5T124</id>
    </interactant>
    <interactant intactId="EBI-1181405">
        <id>Q13131</id>
        <label>PRKAA1</label>
    </interactant>
    <organismsDiffer>false</organismsDiffer>
    <experiments>3</experiments>
</comment>
<comment type="interaction">
    <interactant intactId="EBI-746004">
        <id>Q5T124</id>
    </interactant>
    <interactant intactId="EBI-1053424">
        <id>O43741</id>
        <label>PRKAB2</label>
    </interactant>
    <organismsDiffer>false</organismsDiffer>
    <experiments>3</experiments>
</comment>
<comment type="interaction">
    <interactant intactId="EBI-746004">
        <id>Q5T124</id>
    </interactant>
    <interactant intactId="EBI-359352">
        <id>P25786</id>
        <label>PSMA1</label>
    </interactant>
    <organismsDiffer>false</organismsDiffer>
    <experiments>3</experiments>
</comment>
<comment type="interaction">
    <interactant intactId="EBI-746004">
        <id>Q5T124</id>
    </interactant>
    <interactant intactId="EBI-2367123">
        <id>O94955</id>
        <label>RHOBTB3</label>
    </interactant>
    <organismsDiffer>false</organismsDiffer>
    <experiments>4</experiments>
</comment>
<comment type="interaction">
    <interactant intactId="EBI-746004">
        <id>Q5T124</id>
    </interactant>
    <interactant intactId="EBI-10248548">
        <id>Q63HN8-6</id>
        <label>RNF213</label>
    </interactant>
    <organismsDiffer>false</organismsDiffer>
    <experiments>3</experiments>
</comment>
<comment type="interaction">
    <interactant intactId="EBI-746004">
        <id>Q5T124</id>
    </interactant>
    <interactant intactId="EBI-748391">
        <id>Q9BWG6</id>
        <label>SCNM1</label>
    </interactant>
    <organismsDiffer>false</organismsDiffer>
    <experiments>4</experiments>
</comment>
<comment type="interaction">
    <interactant intactId="EBI-746004">
        <id>Q5T124</id>
    </interactant>
    <interactant intactId="EBI-747035">
        <id>Q9H788</id>
        <label>SH2D4A</label>
    </interactant>
    <organismsDiffer>false</organismsDiffer>
    <experiments>3</experiments>
</comment>
<comment type="interaction">
    <interactant intactId="EBI-746004">
        <id>Q5T124</id>
    </interactant>
    <interactant intactId="EBI-717810">
        <id>Q08117</id>
        <label>TLE5</label>
    </interactant>
    <organismsDiffer>false</organismsDiffer>
    <experiments>3</experiments>
</comment>
<comment type="interaction">
    <interactant intactId="EBI-746004">
        <id>Q5T124</id>
    </interactant>
    <interactant intactId="EBI-355744">
        <id>Q12933</id>
        <label>TRAF2</label>
    </interactant>
    <organismsDiffer>false</organismsDiffer>
    <experiments>5</experiments>
</comment>
<comment type="interaction">
    <interactant intactId="EBI-746004">
        <id>Q5T124</id>
    </interactant>
    <interactant intactId="EBI-739895">
        <id>Q8N6Y0</id>
        <label>USHBP1</label>
    </interactant>
    <organismsDiffer>false</organismsDiffer>
    <experiments>3</experiments>
</comment>
<comment type="interaction">
    <interactant intactId="EBI-11524408">
        <id>Q5T124-6</id>
    </interactant>
    <interactant intactId="EBI-725606">
        <id>Q9NWQ9</id>
        <label>C14orf119</label>
    </interactant>
    <organismsDiffer>false</organismsDiffer>
    <experiments>3</experiments>
</comment>
<comment type="interaction">
    <interactant intactId="EBI-11524408">
        <id>Q5T124-6</id>
    </interactant>
    <interactant intactId="EBI-749051">
        <id>Q8IYR0</id>
        <label>CFAP206</label>
    </interactant>
    <organismsDiffer>false</organismsDiffer>
    <experiments>3</experiments>
</comment>
<comment type="interaction">
    <interactant intactId="EBI-11524408">
        <id>Q5T124-6</id>
    </interactant>
    <interactant intactId="EBI-744099">
        <id>Q9H0I2</id>
        <label>ENKD1</label>
    </interactant>
    <organismsDiffer>false</organismsDiffer>
    <experiments>3</experiments>
</comment>
<comment type="interaction">
    <interactant intactId="EBI-11524408">
        <id>Q5T124-6</id>
    </interactant>
    <interactant intactId="EBI-740220">
        <id>O14964</id>
        <label>HGS</label>
    </interactant>
    <organismsDiffer>false</organismsDiffer>
    <experiments>3</experiments>
</comment>
<comment type="interaction">
    <interactant intactId="EBI-11524408">
        <id>Q5T124-6</id>
    </interactant>
    <interactant intactId="EBI-17178971">
        <id>Q14005-2</id>
        <label>IL16</label>
    </interactant>
    <organismsDiffer>false</organismsDiffer>
    <experiments>3</experiments>
</comment>
<comment type="interaction">
    <interactant intactId="EBI-11524408">
        <id>Q5T124-6</id>
    </interactant>
    <interactant intactId="EBI-726510">
        <id>Q96BZ8</id>
        <label>LENG1</label>
    </interactant>
    <organismsDiffer>false</organismsDiffer>
    <experiments>3</experiments>
</comment>
<comment type="interaction">
    <interactant intactId="EBI-11524408">
        <id>Q5T124-6</id>
    </interactant>
    <interactant intactId="EBI-11750983">
        <id>Q9HC98-4</id>
        <label>NEK6</label>
    </interactant>
    <organismsDiffer>false</organismsDiffer>
    <experiments>3</experiments>
</comment>
<comment type="interaction">
    <interactant intactId="EBI-11524408">
        <id>Q5T124-6</id>
    </interactant>
    <interactant intactId="EBI-3923368">
        <id>Q8N3J5</id>
        <label>PPM1K</label>
    </interactant>
    <organismsDiffer>false</organismsDiffer>
    <experiments>3</experiments>
</comment>
<comment type="interaction">
    <interactant intactId="EBI-11524408">
        <id>Q5T124-6</id>
    </interactant>
    <interactant intactId="EBI-2798416">
        <id>Q99633</id>
        <label>PRPF18</label>
    </interactant>
    <organismsDiffer>false</organismsDiffer>
    <experiments>3</experiments>
</comment>
<comment type="interaction">
    <interactant intactId="EBI-11524408">
        <id>Q5T124-6</id>
    </interactant>
    <interactant intactId="EBI-1567797">
        <id>Q8WWY3</id>
        <label>PRPF31</label>
    </interactant>
    <organismsDiffer>false</organismsDiffer>
    <experiments>3</experiments>
</comment>
<comment type="interaction">
    <interactant intactId="EBI-11524408">
        <id>Q5T124-6</id>
    </interactant>
    <interactant intactId="EBI-11986293">
        <id>P0CG20</id>
        <label>PRR35</label>
    </interactant>
    <organismsDiffer>false</organismsDiffer>
    <experiments>3</experiments>
</comment>
<comment type="interaction">
    <interactant intactId="EBI-11524408">
        <id>Q5T124-6</id>
    </interactant>
    <interactant intactId="EBI-359352">
        <id>P25786</id>
        <label>PSMA1</label>
    </interactant>
    <organismsDiffer>false</organismsDiffer>
    <experiments>3</experiments>
</comment>
<comment type="interaction">
    <interactant intactId="EBI-11524408">
        <id>Q5T124-6</id>
    </interactant>
    <interactant intactId="EBI-372475">
        <id>P14678-2</id>
        <label>SNRPB</label>
    </interactant>
    <organismsDiffer>false</organismsDiffer>
    <experiments>3</experiments>
</comment>
<comment type="interaction">
    <interactant intactId="EBI-11524408">
        <id>Q5T124-6</id>
    </interactant>
    <interactant intactId="EBI-11955057">
        <id>Q8N8B7-2</id>
        <label>TCEANC</label>
    </interactant>
    <organismsDiffer>false</organismsDiffer>
    <experiments>3</experiments>
</comment>
<comment type="interaction">
    <interactant intactId="EBI-11524408">
        <id>Q5T124-6</id>
    </interactant>
    <interactant intactId="EBI-11741437">
        <id>Q08117-2</id>
        <label>TLE5</label>
    </interactant>
    <organismsDiffer>false</organismsDiffer>
    <experiments>3</experiments>
</comment>
<comment type="interaction">
    <interactant intactId="EBI-11524408">
        <id>Q5T124-6</id>
    </interactant>
    <interactant intactId="EBI-355744">
        <id>Q12933</id>
        <label>TRAF2</label>
    </interactant>
    <organismsDiffer>false</organismsDiffer>
    <experiments>3</experiments>
</comment>
<comment type="interaction">
    <interactant intactId="EBI-11524408">
        <id>Q5T124-6</id>
    </interactant>
    <interactant intactId="EBI-9090990">
        <id>Q5W5X9-3</id>
        <label>TTC23</label>
    </interactant>
    <organismsDiffer>false</organismsDiffer>
    <experiments>3</experiments>
</comment>
<comment type="interaction">
    <interactant intactId="EBI-11524408">
        <id>Q5T124-6</id>
    </interactant>
    <interactant intactId="EBI-739895">
        <id>Q8N6Y0</id>
        <label>USHBP1</label>
    </interactant>
    <organismsDiffer>false</organismsDiffer>
    <experiments>3</experiments>
</comment>
<comment type="interaction">
    <interactant intactId="EBI-11524408">
        <id>Q5T124-6</id>
    </interactant>
    <interactant intactId="EBI-355164">
        <id>P55072</id>
        <label>VCP</label>
    </interactant>
    <organismsDiffer>false</organismsDiffer>
    <experiments>7</experiments>
</comment>
<comment type="interaction">
    <interactant intactId="EBI-11524408">
        <id>Q5T124-6</id>
    </interactant>
    <interactant intactId="EBI-9031083">
        <id>Q9Y2B5</id>
        <label>VPS9D1</label>
    </interactant>
    <organismsDiffer>false</organismsDiffer>
    <experiments>3</experiments>
</comment>
<comment type="interaction">
    <interactant intactId="EBI-11524408">
        <id>Q5T124-6</id>
    </interactant>
    <interactant intactId="EBI-12032042">
        <id>Q64LD2-2</id>
        <label>WDR25</label>
    </interactant>
    <organismsDiffer>false</organismsDiffer>
    <experiments>3</experiments>
</comment>
<comment type="interaction">
    <interactant intactId="EBI-11524408">
        <id>Q5T124-6</id>
    </interactant>
    <interactant intactId="EBI-10183064">
        <id>Q8N5A5-2</id>
        <label>ZGPAT</label>
    </interactant>
    <organismsDiffer>false</organismsDiffer>
    <experiments>3</experiments>
</comment>
<comment type="subcellular location">
    <subcellularLocation>
        <location evidence="1">Cytoplasm</location>
        <location evidence="1">Cytoskeleton</location>
    </subcellularLocation>
</comment>
<comment type="alternative products">
    <event type="alternative splicing"/>
    <isoform>
        <id>Q5T124-1</id>
        <name>1</name>
        <sequence type="displayed"/>
    </isoform>
    <isoform>
        <id>Q5T124-2</id>
        <name>2</name>
        <sequence type="described" ref="VSP_024774"/>
    </isoform>
    <isoform>
        <id>Q5T124-3</id>
        <name>3</name>
        <sequence type="described" ref="VSP_024775"/>
    </isoform>
    <isoform>
        <id>Q5T124-4</id>
        <name>4</name>
        <sequence type="described" ref="VSP_024773"/>
    </isoform>
    <isoform>
        <id>Q5T124-5</id>
        <name>5</name>
        <sequence type="described" ref="VSP_024771"/>
    </isoform>
    <isoform>
        <id>Q5T124-6</id>
        <name>6</name>
        <sequence type="described" ref="VSP_024776 VSP_024777"/>
    </isoform>
    <isoform>
        <id>Q5T124-7</id>
        <name>7</name>
        <sequence type="described" ref="VSP_024774 VSP_024776 VSP_024777"/>
    </isoform>
    <isoform>
        <id>Q5T124-8</id>
        <name>8</name>
        <sequence type="described" ref="VSP_024772"/>
    </isoform>
</comment>
<comment type="polymorphism">
    <text evidence="7 8 9">The number of repeats is polymorphic and varies from 1 to 4.</text>
</comment>
<comment type="sequence caution" evidence="16">
    <conflict type="frameshift">
        <sequence resource="EMBL-CDS" id="AAM74202"/>
    </conflict>
</comment>
<comment type="sequence caution" evidence="16">
    <conflict type="frameshift">
        <sequence resource="EMBL-CDS" id="AAQ15261"/>
    </conflict>
</comment>
<dbReference type="EMBL" id="AF521017">
    <property type="protein sequence ID" value="AAM74201.1"/>
    <property type="molecule type" value="mRNA"/>
</dbReference>
<dbReference type="EMBL" id="AF521018">
    <property type="protein sequence ID" value="AAM74202.1"/>
    <property type="status" value="ALT_FRAME"/>
    <property type="molecule type" value="mRNA"/>
</dbReference>
<dbReference type="EMBL" id="AF520989">
    <property type="protein sequence ID" value="AAM76060.1"/>
    <property type="molecule type" value="mRNA"/>
</dbReference>
<dbReference type="EMBL" id="CR749413">
    <property type="protein sequence ID" value="CAH18255.1"/>
    <property type="molecule type" value="mRNA"/>
</dbReference>
<dbReference type="EMBL" id="BX648412">
    <property type="protein sequence ID" value="CAH56155.1"/>
    <property type="molecule type" value="mRNA"/>
</dbReference>
<dbReference type="EMBL" id="AK093258">
    <property type="protein sequence ID" value="BAC04112.1"/>
    <property type="molecule type" value="mRNA"/>
</dbReference>
<dbReference type="EMBL" id="AK094198">
    <property type="protein sequence ID" value="BAC04307.1"/>
    <property type="molecule type" value="mRNA"/>
</dbReference>
<dbReference type="EMBL" id="AK097368">
    <property type="protein sequence ID" value="BAC05024.1"/>
    <property type="molecule type" value="mRNA"/>
</dbReference>
<dbReference type="EMBL" id="AF370425">
    <property type="protein sequence ID" value="AAQ15261.1"/>
    <property type="status" value="ALT_FRAME"/>
    <property type="molecule type" value="mRNA"/>
</dbReference>
<dbReference type="EMBL" id="AL451139">
    <property type="status" value="NOT_ANNOTATED_CDS"/>
    <property type="molecule type" value="Genomic_DNA"/>
</dbReference>
<dbReference type="EMBL" id="CH471059">
    <property type="protein sequence ID" value="EAX07823.1"/>
    <property type="molecule type" value="Genomic_DNA"/>
</dbReference>
<dbReference type="EMBL" id="CH471059">
    <property type="protein sequence ID" value="EAX07826.1"/>
    <property type="molecule type" value="Genomic_DNA"/>
</dbReference>
<dbReference type="EMBL" id="BC038106">
    <property type="protein sequence ID" value="AAH38106.1"/>
    <property type="molecule type" value="mRNA"/>
</dbReference>
<dbReference type="CCDS" id="CCDS41286.1">
    <molecule id="Q5T124-2"/>
</dbReference>
<dbReference type="CCDS" id="CCDS41287.1">
    <molecule id="Q5T124-3"/>
</dbReference>
<dbReference type="CCDS" id="CCDS41288.1">
    <molecule id="Q5T124-1"/>
</dbReference>
<dbReference type="RefSeq" id="NP_001070730.1">
    <molecule id="Q5T124-3"/>
    <property type="nucleotide sequence ID" value="NM_001077262.2"/>
</dbReference>
<dbReference type="RefSeq" id="NP_001376485.1">
    <molecule id="Q5T124-1"/>
    <property type="nucleotide sequence ID" value="NM_001389556.1"/>
</dbReference>
<dbReference type="RefSeq" id="NP_001376488.1">
    <molecule id="Q5T124-2"/>
    <property type="nucleotide sequence ID" value="NM_001389559.1"/>
</dbReference>
<dbReference type="RefSeq" id="NP_663320.2">
    <molecule id="Q5T124-2"/>
    <property type="nucleotide sequence ID" value="NM_145345.3"/>
</dbReference>
<dbReference type="RefSeq" id="NP_892120.2">
    <molecule id="Q5T124-1"/>
    <property type="nucleotide sequence ID" value="NM_183008.3"/>
</dbReference>
<dbReference type="SMR" id="Q5T124"/>
<dbReference type="BioGRID" id="124844">
    <property type="interactions" value="61"/>
</dbReference>
<dbReference type="FunCoup" id="Q5T124">
    <property type="interactions" value="515"/>
</dbReference>
<dbReference type="IntAct" id="Q5T124">
    <property type="interactions" value="41"/>
</dbReference>
<dbReference type="MINT" id="Q5T124"/>
<dbReference type="STRING" id="9606.ENSP00000363339"/>
<dbReference type="ChEMBL" id="CHEMBL5291603"/>
<dbReference type="GlyGen" id="Q5T124">
    <property type="glycosylation" value="2 sites"/>
</dbReference>
<dbReference type="iPTMnet" id="Q5T124"/>
<dbReference type="PhosphoSitePlus" id="Q5T124"/>
<dbReference type="BioMuta" id="UBXN11"/>
<dbReference type="DMDM" id="146325810"/>
<dbReference type="jPOST" id="Q5T124"/>
<dbReference type="MassIVE" id="Q5T124"/>
<dbReference type="PaxDb" id="9606-ENSP00000363339"/>
<dbReference type="PeptideAtlas" id="Q5T124"/>
<dbReference type="ProteomicsDB" id="64223">
    <molecule id="Q5T124-1"/>
</dbReference>
<dbReference type="ProteomicsDB" id="64224">
    <molecule id="Q5T124-2"/>
</dbReference>
<dbReference type="ProteomicsDB" id="64225">
    <molecule id="Q5T124-3"/>
</dbReference>
<dbReference type="ProteomicsDB" id="64226">
    <molecule id="Q5T124-4"/>
</dbReference>
<dbReference type="ProteomicsDB" id="64227">
    <molecule id="Q5T124-5"/>
</dbReference>
<dbReference type="ProteomicsDB" id="64228">
    <molecule id="Q5T124-6"/>
</dbReference>
<dbReference type="ProteomicsDB" id="64229">
    <molecule id="Q5T124-7"/>
</dbReference>
<dbReference type="ProteomicsDB" id="64230">
    <molecule id="Q5T124-8"/>
</dbReference>
<dbReference type="Antibodypedia" id="30597">
    <property type="antibodies" value="73 antibodies from 23 providers"/>
</dbReference>
<dbReference type="DNASU" id="91544"/>
<dbReference type="Ensembl" id="ENST00000314675.11">
    <molecule id="Q5T124-3"/>
    <property type="protein sequence ID" value="ENSP00000324721.7"/>
    <property type="gene ID" value="ENSG00000158062.21"/>
</dbReference>
<dbReference type="Ensembl" id="ENST00000357089.8">
    <molecule id="Q5T124-2"/>
    <property type="protein sequence ID" value="ENSP00000349601.4"/>
    <property type="gene ID" value="ENSG00000158062.21"/>
</dbReference>
<dbReference type="Ensembl" id="ENST00000374217.7">
    <molecule id="Q5T124-2"/>
    <property type="protein sequence ID" value="ENSP00000363334.2"/>
    <property type="gene ID" value="ENSG00000158062.21"/>
</dbReference>
<dbReference type="Ensembl" id="ENST00000374221.7">
    <molecule id="Q5T124-1"/>
    <property type="protein sequence ID" value="ENSP00000363338.3"/>
    <property type="gene ID" value="ENSG00000158062.21"/>
</dbReference>
<dbReference type="Ensembl" id="ENST00000374222.6">
    <molecule id="Q5T124-1"/>
    <property type="protein sequence ID" value="ENSP00000363339.1"/>
    <property type="gene ID" value="ENSG00000158062.21"/>
</dbReference>
<dbReference type="GeneID" id="91544"/>
<dbReference type="KEGG" id="hsa:91544"/>
<dbReference type="MANE-Select" id="ENST00000374222.6">
    <property type="protein sequence ID" value="ENSP00000363339.1"/>
    <property type="RefSeq nucleotide sequence ID" value="NM_001389556.1"/>
    <property type="RefSeq protein sequence ID" value="NP_001376485.1"/>
</dbReference>
<dbReference type="UCSC" id="uc001blw.4">
    <molecule id="Q5T124-1"/>
    <property type="organism name" value="human"/>
</dbReference>
<dbReference type="AGR" id="HGNC:30600"/>
<dbReference type="CTD" id="91544"/>
<dbReference type="DisGeNET" id="91544"/>
<dbReference type="GeneCards" id="UBXN11"/>
<dbReference type="HGNC" id="HGNC:30600">
    <property type="gene designation" value="UBXN11"/>
</dbReference>
<dbReference type="HPA" id="ENSG00000158062">
    <property type="expression patterns" value="Low tissue specificity"/>
</dbReference>
<dbReference type="MIM" id="609151">
    <property type="type" value="gene"/>
</dbReference>
<dbReference type="neXtProt" id="NX_Q5T124"/>
<dbReference type="OpenTargets" id="ENSG00000158062"/>
<dbReference type="PharmGKB" id="PA162408338"/>
<dbReference type="VEuPathDB" id="HostDB:ENSG00000158062"/>
<dbReference type="eggNOG" id="KOG2086">
    <property type="taxonomic scope" value="Eukaryota"/>
</dbReference>
<dbReference type="GeneTree" id="ENSGT00520000055567"/>
<dbReference type="HOGENOM" id="CLU_044433_0_1_1"/>
<dbReference type="InParanoid" id="Q5T124"/>
<dbReference type="OMA" id="DFELMSA"/>
<dbReference type="OrthoDB" id="25887at2759"/>
<dbReference type="PAN-GO" id="Q5T124">
    <property type="GO annotations" value="2 GO annotations based on evolutionary models"/>
</dbReference>
<dbReference type="PhylomeDB" id="Q5T124"/>
<dbReference type="TreeFam" id="TF329799"/>
<dbReference type="PathwayCommons" id="Q5T124"/>
<dbReference type="Reactome" id="R-HSA-9696264">
    <property type="pathway name" value="RND3 GTPase cycle"/>
</dbReference>
<dbReference type="Reactome" id="R-HSA-9696270">
    <property type="pathway name" value="RND2 GTPase cycle"/>
</dbReference>
<dbReference type="Reactome" id="R-HSA-9696273">
    <property type="pathway name" value="RND1 GTPase cycle"/>
</dbReference>
<dbReference type="SignaLink" id="Q5T124"/>
<dbReference type="BioGRID-ORCS" id="91544">
    <property type="hits" value="8 hits in 1157 CRISPR screens"/>
</dbReference>
<dbReference type="ChiTaRS" id="UBXN11">
    <property type="organism name" value="human"/>
</dbReference>
<dbReference type="GeneWiki" id="UBXD5"/>
<dbReference type="GenomeRNAi" id="91544"/>
<dbReference type="Pharos" id="Q5T124">
    <property type="development level" value="Tbio"/>
</dbReference>
<dbReference type="PRO" id="PR:Q5T124"/>
<dbReference type="Proteomes" id="UP000005640">
    <property type="component" value="Chromosome 1"/>
</dbReference>
<dbReference type="RNAct" id="Q5T124">
    <property type="molecule type" value="protein"/>
</dbReference>
<dbReference type="Bgee" id="ENSG00000158062">
    <property type="expression patterns" value="Expressed in right uterine tube and 145 other cell types or tissues"/>
</dbReference>
<dbReference type="ExpressionAtlas" id="Q5T124">
    <property type="expression patterns" value="baseline and differential"/>
</dbReference>
<dbReference type="GO" id="GO:0005856">
    <property type="term" value="C:cytoskeleton"/>
    <property type="evidence" value="ECO:0007669"/>
    <property type="project" value="UniProtKB-SubCell"/>
</dbReference>
<dbReference type="GO" id="GO:0005829">
    <property type="term" value="C:cytosol"/>
    <property type="evidence" value="ECO:0000304"/>
    <property type="project" value="Reactome"/>
</dbReference>
<dbReference type="GO" id="GO:0043130">
    <property type="term" value="F:ubiquitin binding"/>
    <property type="evidence" value="ECO:0000318"/>
    <property type="project" value="GO_Central"/>
</dbReference>
<dbReference type="GO" id="GO:0043161">
    <property type="term" value="P:proteasome-mediated ubiquitin-dependent protein catabolic process"/>
    <property type="evidence" value="ECO:0000318"/>
    <property type="project" value="GO_Central"/>
</dbReference>
<dbReference type="CDD" id="cd17077">
    <property type="entry name" value="UBX_UBXN11"/>
    <property type="match status" value="1"/>
</dbReference>
<dbReference type="FunFam" id="3.10.20.90:FF:000177">
    <property type="entry name" value="UBX domain protein 11"/>
    <property type="match status" value="1"/>
</dbReference>
<dbReference type="FunFam" id="3.30.420.210:FF:000003">
    <property type="entry name" value="UBX domain protein 11"/>
    <property type="match status" value="1"/>
</dbReference>
<dbReference type="Gene3D" id="3.10.20.90">
    <property type="entry name" value="Phosphatidylinositol 3-kinase Catalytic Subunit, Chain A, domain 1"/>
    <property type="match status" value="1"/>
</dbReference>
<dbReference type="Gene3D" id="3.30.420.210">
    <property type="entry name" value="SEP domain"/>
    <property type="match status" value="1"/>
</dbReference>
<dbReference type="InterPro" id="IPR036241">
    <property type="entry name" value="NSFL1C_SEP_dom_sf"/>
</dbReference>
<dbReference type="InterPro" id="IPR012989">
    <property type="entry name" value="SEP_domain"/>
</dbReference>
<dbReference type="InterPro" id="IPR029071">
    <property type="entry name" value="Ubiquitin-like_domsf"/>
</dbReference>
<dbReference type="InterPro" id="IPR001012">
    <property type="entry name" value="UBX_dom"/>
</dbReference>
<dbReference type="PANTHER" id="PTHR23333">
    <property type="entry name" value="UBX DOMAIN CONTAINING PROTEIN"/>
    <property type="match status" value="1"/>
</dbReference>
<dbReference type="PANTHER" id="PTHR23333:SF4">
    <property type="entry name" value="UBX DOMAIN-CONTAINING PROTEIN 11"/>
    <property type="match status" value="1"/>
</dbReference>
<dbReference type="Pfam" id="PF08059">
    <property type="entry name" value="SEP"/>
    <property type="match status" value="1"/>
</dbReference>
<dbReference type="Pfam" id="PF00789">
    <property type="entry name" value="UBX"/>
    <property type="match status" value="1"/>
</dbReference>
<dbReference type="SUPFAM" id="SSF102848">
    <property type="entry name" value="NSFL1 (p97 ATPase) cofactor p47, SEP domain"/>
    <property type="match status" value="1"/>
</dbReference>
<dbReference type="SUPFAM" id="SSF54236">
    <property type="entry name" value="Ubiquitin-like"/>
    <property type="match status" value="1"/>
</dbReference>
<dbReference type="PROSITE" id="PS51399">
    <property type="entry name" value="SEP"/>
    <property type="match status" value="1"/>
</dbReference>
<dbReference type="PROSITE" id="PS50033">
    <property type="entry name" value="UBX"/>
    <property type="match status" value="1"/>
</dbReference>
<gene>
    <name type="primary">UBXN11</name>
    <name type="synonym">SOC</name>
    <name type="synonym">UBXD5</name>
    <name type="ORF">PP2243</name>
</gene>
<proteinExistence type="evidence at protein level"/>
<organism>
    <name type="scientific">Homo sapiens</name>
    <name type="common">Human</name>
    <dbReference type="NCBI Taxonomy" id="9606"/>
    <lineage>
        <taxon>Eukaryota</taxon>
        <taxon>Metazoa</taxon>
        <taxon>Chordata</taxon>
        <taxon>Craniata</taxon>
        <taxon>Vertebrata</taxon>
        <taxon>Euteleostomi</taxon>
        <taxon>Mammalia</taxon>
        <taxon>Eutheria</taxon>
        <taxon>Euarchontoglires</taxon>
        <taxon>Primates</taxon>
        <taxon>Haplorrhini</taxon>
        <taxon>Catarrhini</taxon>
        <taxon>Hominidae</taxon>
        <taxon>Homo</taxon>
    </lineage>
</organism>
<accession>Q5T124</accession>
<accession>D3DPK6</accession>
<accession>Q5T117</accession>
<accession>Q5T120</accession>
<accession>Q5T125</accession>
<accession>Q5T126</accession>
<accession>Q5T129</accession>
<accession>Q5T131</accession>
<accession>Q5T133</accession>
<accession>Q63HM6</accession>
<accession>Q71RB3</accession>
<accession>Q8IY27</accession>
<accession>Q8N1L6</accession>
<accession>Q8N9M4</accession>
<accession>Q8NA18</accession>
<accession>Q8NFE3</accession>
<accession>Q8NFE4</accession>
<accession>Q8NFE6</accession>
<keyword id="KW-0025">Alternative splicing</keyword>
<keyword id="KW-0175">Coiled coil</keyword>
<keyword id="KW-0963">Cytoplasm</keyword>
<keyword id="KW-0206">Cytoskeleton</keyword>
<keyword id="KW-1267">Proteomics identification</keyword>
<keyword id="KW-1185">Reference proteome</keyword>
<keyword id="KW-0677">Repeat</keyword>
<evidence type="ECO:0000250" key="1"/>
<evidence type="ECO:0000255" key="2"/>
<evidence type="ECO:0000255" key="3">
    <source>
        <dbReference type="PROSITE-ProRule" id="PRU00215"/>
    </source>
</evidence>
<evidence type="ECO:0000255" key="4">
    <source>
        <dbReference type="PROSITE-ProRule" id="PRU00732"/>
    </source>
</evidence>
<evidence type="ECO:0000256" key="5">
    <source>
        <dbReference type="SAM" id="MobiDB-lite"/>
    </source>
</evidence>
<evidence type="ECO:0000269" key="6">
    <source>
    </source>
</evidence>
<evidence type="ECO:0000269" key="7">
    <source>
    </source>
</evidence>
<evidence type="ECO:0000269" key="8">
    <source>
    </source>
</evidence>
<evidence type="ECO:0000269" key="9">
    <source ref="2"/>
</evidence>
<evidence type="ECO:0000303" key="10">
    <source>
    </source>
</evidence>
<evidence type="ECO:0000303" key="11">
    <source>
    </source>
</evidence>
<evidence type="ECO:0000303" key="12">
    <source>
    </source>
</evidence>
<evidence type="ECO:0000303" key="13">
    <source>
    </source>
</evidence>
<evidence type="ECO:0000303" key="14">
    <source>
    </source>
</evidence>
<evidence type="ECO:0000303" key="15">
    <source ref="2"/>
</evidence>
<evidence type="ECO:0000305" key="16"/>
<reference key="1">
    <citation type="journal article" date="2003" name="Cancer Res.">
        <title>Identification of a colorectal tumor-associated antigen (COA-1) recognized by CD4(+) T lymphocytes.</title>
        <authorList>
            <person name="Maccalli C."/>
            <person name="Li Y.F."/>
            <person name="El-Gamil M."/>
            <person name="Rosenberg S.A."/>
            <person name="Robbins P.F."/>
        </authorList>
    </citation>
    <scope>NUCLEOTIDE SEQUENCE [MRNA] (ISOFORM 8)</scope>
    <scope>VARIANT VAL-474</scope>
    <source>
        <tissue>Colon cancer</tissue>
    </source>
</reference>
<reference key="2">
    <citation type="submission" date="2002-06" db="EMBL/GenBank/DDBJ databases">
        <authorList>
            <person name="Cai Q."/>
            <person name="Yu L."/>
        </authorList>
    </citation>
    <scope>NUCLEOTIDE SEQUENCE [LARGE SCALE MRNA] (ISOFORMS 2 AND 8)</scope>
    <scope>VARIANTS ARG-312; 487-PRO--SER-494 DEL; 488-PRO--SER-502 DEL AND SER-509</scope>
</reference>
<reference key="3">
    <citation type="journal article" date="2007" name="BMC Genomics">
        <title>The full-ORF clone resource of the German cDNA consortium.</title>
        <authorList>
            <person name="Bechtel S."/>
            <person name="Rosenfelder H."/>
            <person name="Duda A."/>
            <person name="Schmidt C.P."/>
            <person name="Ernst U."/>
            <person name="Wellenreuther R."/>
            <person name="Mehrle A."/>
            <person name="Schuster C."/>
            <person name="Bahr A."/>
            <person name="Bloecker H."/>
            <person name="Heubner D."/>
            <person name="Hoerlein A."/>
            <person name="Michel G."/>
            <person name="Wedler H."/>
            <person name="Koehrer K."/>
            <person name="Ottenwaelder B."/>
            <person name="Poustka A."/>
            <person name="Wiemann S."/>
            <person name="Schupp I."/>
        </authorList>
    </citation>
    <scope>NUCLEOTIDE SEQUENCE [LARGE SCALE MRNA] (ISOFORMS 6 AND 7)</scope>
    <source>
        <tissue>Small intestine</tissue>
    </source>
</reference>
<reference key="4">
    <citation type="journal article" date="2004" name="Nat. Genet.">
        <title>Complete sequencing and characterization of 21,243 full-length human cDNAs.</title>
        <authorList>
            <person name="Ota T."/>
            <person name="Suzuki Y."/>
            <person name="Nishikawa T."/>
            <person name="Otsuki T."/>
            <person name="Sugiyama T."/>
            <person name="Irie R."/>
            <person name="Wakamatsu A."/>
            <person name="Hayashi K."/>
            <person name="Sato H."/>
            <person name="Nagai K."/>
            <person name="Kimura K."/>
            <person name="Makita H."/>
            <person name="Sekine M."/>
            <person name="Obayashi M."/>
            <person name="Nishi T."/>
            <person name="Shibahara T."/>
            <person name="Tanaka T."/>
            <person name="Ishii S."/>
            <person name="Yamamoto J."/>
            <person name="Saito K."/>
            <person name="Kawai Y."/>
            <person name="Isono Y."/>
            <person name="Nakamura Y."/>
            <person name="Nagahari K."/>
            <person name="Murakami K."/>
            <person name="Yasuda T."/>
            <person name="Iwayanagi T."/>
            <person name="Wagatsuma M."/>
            <person name="Shiratori A."/>
            <person name="Sudo H."/>
            <person name="Hosoiri T."/>
            <person name="Kaku Y."/>
            <person name="Kodaira H."/>
            <person name="Kondo H."/>
            <person name="Sugawara M."/>
            <person name="Takahashi M."/>
            <person name="Kanda K."/>
            <person name="Yokoi T."/>
            <person name="Furuya T."/>
            <person name="Kikkawa E."/>
            <person name="Omura Y."/>
            <person name="Abe K."/>
            <person name="Kamihara K."/>
            <person name="Katsuta N."/>
            <person name="Sato K."/>
            <person name="Tanikawa M."/>
            <person name="Yamazaki M."/>
            <person name="Ninomiya K."/>
            <person name="Ishibashi T."/>
            <person name="Yamashita H."/>
            <person name="Murakawa K."/>
            <person name="Fujimori K."/>
            <person name="Tanai H."/>
            <person name="Kimata M."/>
            <person name="Watanabe M."/>
            <person name="Hiraoka S."/>
            <person name="Chiba Y."/>
            <person name="Ishida S."/>
            <person name="Ono Y."/>
            <person name="Takiguchi S."/>
            <person name="Watanabe S."/>
            <person name="Yosida M."/>
            <person name="Hotuta T."/>
            <person name="Kusano J."/>
            <person name="Kanehori K."/>
            <person name="Takahashi-Fujii A."/>
            <person name="Hara H."/>
            <person name="Tanase T.-O."/>
            <person name="Nomura Y."/>
            <person name="Togiya S."/>
            <person name="Komai F."/>
            <person name="Hara R."/>
            <person name="Takeuchi K."/>
            <person name="Arita M."/>
            <person name="Imose N."/>
            <person name="Musashino K."/>
            <person name="Yuuki H."/>
            <person name="Oshima A."/>
            <person name="Sasaki N."/>
            <person name="Aotsuka S."/>
            <person name="Yoshikawa Y."/>
            <person name="Matsunawa H."/>
            <person name="Ichihara T."/>
            <person name="Shiohata N."/>
            <person name="Sano S."/>
            <person name="Moriya S."/>
            <person name="Momiyama H."/>
            <person name="Satoh N."/>
            <person name="Takami S."/>
            <person name="Terashima Y."/>
            <person name="Suzuki O."/>
            <person name="Nakagawa S."/>
            <person name="Senoh A."/>
            <person name="Mizoguchi H."/>
            <person name="Goto Y."/>
            <person name="Shimizu F."/>
            <person name="Wakebe H."/>
            <person name="Hishigaki H."/>
            <person name="Watanabe T."/>
            <person name="Sugiyama A."/>
            <person name="Takemoto M."/>
            <person name="Kawakami B."/>
            <person name="Yamazaki M."/>
            <person name="Watanabe K."/>
            <person name="Kumagai A."/>
            <person name="Itakura S."/>
            <person name="Fukuzumi Y."/>
            <person name="Fujimori Y."/>
            <person name="Komiyama M."/>
            <person name="Tashiro H."/>
            <person name="Tanigami A."/>
            <person name="Fujiwara T."/>
            <person name="Ono T."/>
            <person name="Yamada K."/>
            <person name="Fujii Y."/>
            <person name="Ozaki K."/>
            <person name="Hirao M."/>
            <person name="Ohmori Y."/>
            <person name="Kawabata A."/>
            <person name="Hikiji T."/>
            <person name="Kobatake N."/>
            <person name="Inagaki H."/>
            <person name="Ikema Y."/>
            <person name="Okamoto S."/>
            <person name="Okitani R."/>
            <person name="Kawakami T."/>
            <person name="Noguchi S."/>
            <person name="Itoh T."/>
            <person name="Shigeta K."/>
            <person name="Senba T."/>
            <person name="Matsumura K."/>
            <person name="Nakajima Y."/>
            <person name="Mizuno T."/>
            <person name="Morinaga M."/>
            <person name="Sasaki M."/>
            <person name="Togashi T."/>
            <person name="Oyama M."/>
            <person name="Hata H."/>
            <person name="Watanabe M."/>
            <person name="Komatsu T."/>
            <person name="Mizushima-Sugano J."/>
            <person name="Satoh T."/>
            <person name="Shirai Y."/>
            <person name="Takahashi Y."/>
            <person name="Nakagawa K."/>
            <person name="Okumura K."/>
            <person name="Nagase T."/>
            <person name="Nomura N."/>
            <person name="Kikuchi H."/>
            <person name="Masuho Y."/>
            <person name="Yamashita R."/>
            <person name="Nakai K."/>
            <person name="Yada T."/>
            <person name="Nakamura Y."/>
            <person name="Ohara O."/>
            <person name="Isogai T."/>
            <person name="Sugano S."/>
        </authorList>
    </citation>
    <scope>NUCLEOTIDE SEQUENCE [LARGE SCALE MRNA] (ISOFORMS 1; 2 AND 3)</scope>
    <scope>VARIANTS ARG-312; PRO-GLY-PRO-GLY-PRO-GLY-PRO-SER-486 INS; 487-PRO--SER-494 DEL AND SER-509</scope>
    <source>
        <tissue>Synovium</tissue>
        <tissue>Testis</tissue>
    </source>
</reference>
<reference key="5">
    <citation type="journal article" date="2004" name="Proc. Natl. Acad. Sci. U.S.A.">
        <title>Large-scale cDNA transfection screening for genes related to cancer development and progression.</title>
        <authorList>
            <person name="Wan D."/>
            <person name="Gong Y."/>
            <person name="Qin W."/>
            <person name="Zhang P."/>
            <person name="Li J."/>
            <person name="Wei L."/>
            <person name="Zhou X."/>
            <person name="Li H."/>
            <person name="Qiu X."/>
            <person name="Zhong F."/>
            <person name="He L."/>
            <person name="Yu J."/>
            <person name="Yao G."/>
            <person name="Jiang H."/>
            <person name="Qian L."/>
            <person name="Yu Y."/>
            <person name="Shu H."/>
            <person name="Chen X."/>
            <person name="Xu H."/>
            <person name="Guo M."/>
            <person name="Pan Z."/>
            <person name="Chen Y."/>
            <person name="Ge C."/>
            <person name="Yang S."/>
            <person name="Gu J."/>
        </authorList>
    </citation>
    <scope>NUCLEOTIDE SEQUENCE [LARGE SCALE MRNA] (ISOFORM 5)</scope>
    <scope>VARIANT PRO-GLY-PRO-GLY-PRO-GLY-PRO-SER-486 INS</scope>
</reference>
<reference key="6">
    <citation type="journal article" date="2006" name="Nature">
        <title>The DNA sequence and biological annotation of human chromosome 1.</title>
        <authorList>
            <person name="Gregory S.G."/>
            <person name="Barlow K.F."/>
            <person name="McLay K.E."/>
            <person name="Kaul R."/>
            <person name="Swarbreck D."/>
            <person name="Dunham A."/>
            <person name="Scott C.E."/>
            <person name="Howe K.L."/>
            <person name="Woodfine K."/>
            <person name="Spencer C.C.A."/>
            <person name="Jones M.C."/>
            <person name="Gillson C."/>
            <person name="Searle S."/>
            <person name="Zhou Y."/>
            <person name="Kokocinski F."/>
            <person name="McDonald L."/>
            <person name="Evans R."/>
            <person name="Phillips K."/>
            <person name="Atkinson A."/>
            <person name="Cooper R."/>
            <person name="Jones C."/>
            <person name="Hall R.E."/>
            <person name="Andrews T.D."/>
            <person name="Lloyd C."/>
            <person name="Ainscough R."/>
            <person name="Almeida J.P."/>
            <person name="Ambrose K.D."/>
            <person name="Anderson F."/>
            <person name="Andrew R.W."/>
            <person name="Ashwell R.I.S."/>
            <person name="Aubin K."/>
            <person name="Babbage A.K."/>
            <person name="Bagguley C.L."/>
            <person name="Bailey J."/>
            <person name="Beasley H."/>
            <person name="Bethel G."/>
            <person name="Bird C.P."/>
            <person name="Bray-Allen S."/>
            <person name="Brown J.Y."/>
            <person name="Brown A.J."/>
            <person name="Buckley D."/>
            <person name="Burton J."/>
            <person name="Bye J."/>
            <person name="Carder C."/>
            <person name="Chapman J.C."/>
            <person name="Clark S.Y."/>
            <person name="Clarke G."/>
            <person name="Clee C."/>
            <person name="Cobley V."/>
            <person name="Collier R.E."/>
            <person name="Corby N."/>
            <person name="Coville G.J."/>
            <person name="Davies J."/>
            <person name="Deadman R."/>
            <person name="Dunn M."/>
            <person name="Earthrowl M."/>
            <person name="Ellington A.G."/>
            <person name="Errington H."/>
            <person name="Frankish A."/>
            <person name="Frankland J."/>
            <person name="French L."/>
            <person name="Garner P."/>
            <person name="Garnett J."/>
            <person name="Gay L."/>
            <person name="Ghori M.R.J."/>
            <person name="Gibson R."/>
            <person name="Gilby L.M."/>
            <person name="Gillett W."/>
            <person name="Glithero R.J."/>
            <person name="Grafham D.V."/>
            <person name="Griffiths C."/>
            <person name="Griffiths-Jones S."/>
            <person name="Grocock R."/>
            <person name="Hammond S."/>
            <person name="Harrison E.S.I."/>
            <person name="Hart E."/>
            <person name="Haugen E."/>
            <person name="Heath P.D."/>
            <person name="Holmes S."/>
            <person name="Holt K."/>
            <person name="Howden P.J."/>
            <person name="Hunt A.R."/>
            <person name="Hunt S.E."/>
            <person name="Hunter G."/>
            <person name="Isherwood J."/>
            <person name="James R."/>
            <person name="Johnson C."/>
            <person name="Johnson D."/>
            <person name="Joy A."/>
            <person name="Kay M."/>
            <person name="Kershaw J.K."/>
            <person name="Kibukawa M."/>
            <person name="Kimberley A.M."/>
            <person name="King A."/>
            <person name="Knights A.J."/>
            <person name="Lad H."/>
            <person name="Laird G."/>
            <person name="Lawlor S."/>
            <person name="Leongamornlert D.A."/>
            <person name="Lloyd D.M."/>
            <person name="Loveland J."/>
            <person name="Lovell J."/>
            <person name="Lush M.J."/>
            <person name="Lyne R."/>
            <person name="Martin S."/>
            <person name="Mashreghi-Mohammadi M."/>
            <person name="Matthews L."/>
            <person name="Matthews N.S.W."/>
            <person name="McLaren S."/>
            <person name="Milne S."/>
            <person name="Mistry S."/>
            <person name="Moore M.J.F."/>
            <person name="Nickerson T."/>
            <person name="O'Dell C.N."/>
            <person name="Oliver K."/>
            <person name="Palmeiri A."/>
            <person name="Palmer S.A."/>
            <person name="Parker A."/>
            <person name="Patel D."/>
            <person name="Pearce A.V."/>
            <person name="Peck A.I."/>
            <person name="Pelan S."/>
            <person name="Phelps K."/>
            <person name="Phillimore B.J."/>
            <person name="Plumb R."/>
            <person name="Rajan J."/>
            <person name="Raymond C."/>
            <person name="Rouse G."/>
            <person name="Saenphimmachak C."/>
            <person name="Sehra H.K."/>
            <person name="Sheridan E."/>
            <person name="Shownkeen R."/>
            <person name="Sims S."/>
            <person name="Skuce C.D."/>
            <person name="Smith M."/>
            <person name="Steward C."/>
            <person name="Subramanian S."/>
            <person name="Sycamore N."/>
            <person name="Tracey A."/>
            <person name="Tromans A."/>
            <person name="Van Helmond Z."/>
            <person name="Wall M."/>
            <person name="Wallis J.M."/>
            <person name="White S."/>
            <person name="Whitehead S.L."/>
            <person name="Wilkinson J.E."/>
            <person name="Willey D.L."/>
            <person name="Williams H."/>
            <person name="Wilming L."/>
            <person name="Wray P.W."/>
            <person name="Wu Z."/>
            <person name="Coulson A."/>
            <person name="Vaudin M."/>
            <person name="Sulston J.E."/>
            <person name="Durbin R.M."/>
            <person name="Hubbard T."/>
            <person name="Wooster R."/>
            <person name="Dunham I."/>
            <person name="Carter N.P."/>
            <person name="McVean G."/>
            <person name="Ross M.T."/>
            <person name="Harrow J."/>
            <person name="Olson M.V."/>
            <person name="Beck S."/>
            <person name="Rogers J."/>
            <person name="Bentley D.R."/>
        </authorList>
    </citation>
    <scope>NUCLEOTIDE SEQUENCE [LARGE SCALE GENOMIC DNA]</scope>
</reference>
<reference key="7">
    <citation type="submission" date="2005-09" db="EMBL/GenBank/DDBJ databases">
        <authorList>
            <person name="Mural R.J."/>
            <person name="Istrail S."/>
            <person name="Sutton G.G."/>
            <person name="Florea L."/>
            <person name="Halpern A.L."/>
            <person name="Mobarry C.M."/>
            <person name="Lippert R."/>
            <person name="Walenz B."/>
            <person name="Shatkay H."/>
            <person name="Dew I."/>
            <person name="Miller J.R."/>
            <person name="Flanigan M.J."/>
            <person name="Edwards N.J."/>
            <person name="Bolanos R."/>
            <person name="Fasulo D."/>
            <person name="Halldorsson B.V."/>
            <person name="Hannenhalli S."/>
            <person name="Turner R."/>
            <person name="Yooseph S."/>
            <person name="Lu F."/>
            <person name="Nusskern D.R."/>
            <person name="Shue B.C."/>
            <person name="Zheng X.H."/>
            <person name="Zhong F."/>
            <person name="Delcher A.L."/>
            <person name="Huson D.H."/>
            <person name="Kravitz S.A."/>
            <person name="Mouchard L."/>
            <person name="Reinert K."/>
            <person name="Remington K.A."/>
            <person name="Clark A.G."/>
            <person name="Waterman M.S."/>
            <person name="Eichler E.E."/>
            <person name="Adams M.D."/>
            <person name="Hunkapiller M.W."/>
            <person name="Myers E.W."/>
            <person name="Venter J.C."/>
        </authorList>
    </citation>
    <scope>NUCLEOTIDE SEQUENCE [LARGE SCALE GENOMIC DNA]</scope>
</reference>
<reference key="8">
    <citation type="journal article" date="2004" name="Genome Res.">
        <title>The status, quality, and expansion of the NIH full-length cDNA project: the Mammalian Gene Collection (MGC).</title>
        <authorList>
            <consortium name="The MGC Project Team"/>
        </authorList>
    </citation>
    <scope>NUCLEOTIDE SEQUENCE [LARGE SCALE MRNA] (ISOFORM 6)</scope>
    <source>
        <tissue>Testis</tissue>
    </source>
</reference>
<reference key="9">
    <citation type="journal article" date="2002" name="Mol. Cell. Biol.">
        <title>Socius is a novel Rnd GTPase-interacting protein involved in disassembly of actin stress fibers.</title>
        <authorList>
            <person name="Katoh H."/>
            <person name="Harada A."/>
            <person name="Mori K."/>
            <person name="Negishi M."/>
        </authorList>
    </citation>
    <scope>IDENTIFICATION</scope>
</reference>
<feature type="chain" id="PRO_0000284921" description="UBX domain-containing protein 11">
    <location>
        <begin position="1"/>
        <end position="520"/>
    </location>
</feature>
<feature type="domain" description="SEP" evidence="4">
    <location>
        <begin position="230"/>
        <end position="294"/>
    </location>
</feature>
<feature type="domain" description="UBX" evidence="3">
    <location>
        <begin position="392"/>
        <end position="469"/>
    </location>
</feature>
<feature type="repeat" description="1">
    <location>
        <begin position="487"/>
        <end position="494"/>
    </location>
</feature>
<feature type="repeat" description="2">
    <location>
        <begin position="495"/>
        <end position="502"/>
    </location>
</feature>
<feature type="repeat" description="3">
    <location>
        <begin position="503"/>
        <end position="510"/>
    </location>
</feature>
<feature type="region of interest" description="Disordered" evidence="5">
    <location>
        <begin position="1"/>
        <end position="26"/>
    </location>
</feature>
<feature type="region of interest" description="Disordered" evidence="5">
    <location>
        <begin position="476"/>
        <end position="520"/>
    </location>
</feature>
<feature type="region of interest" description="3 X 8 AA tandem repeats of P-G-P-G-P-G-P-S">
    <location>
        <begin position="487"/>
        <end position="510"/>
    </location>
</feature>
<feature type="coiled-coil region" evidence="2">
    <location>
        <begin position="76"/>
        <end position="149"/>
    </location>
</feature>
<feature type="compositionally biased region" description="Pro residues" evidence="5">
    <location>
        <begin position="484"/>
        <end position="520"/>
    </location>
</feature>
<feature type="splice variant" id="VSP_024771" description="In isoform 5." evidence="13">
    <location>
        <begin position="1"/>
        <end position="312"/>
    </location>
</feature>
<feature type="splice variant" id="VSP_024772" description="In isoform 8." evidence="10 15">
    <location>
        <begin position="1"/>
        <end position="75"/>
    </location>
</feature>
<feature type="splice variant" id="VSP_024773" description="In isoform 4." evidence="16">
    <location>
        <begin position="1"/>
        <end position="38"/>
    </location>
</feature>
<feature type="splice variant" id="VSP_024774" description="In isoform 2 and isoform 7." evidence="11 14 15">
    <location>
        <begin position="34"/>
        <end position="66"/>
    </location>
</feature>
<feature type="splice variant" id="VSP_024775" description="In isoform 3." evidence="11">
    <location>
        <begin position="67"/>
        <end position="186"/>
    </location>
</feature>
<feature type="splice variant" id="VSP_024776" description="In isoform 6 and isoform 7." evidence="12 14">
    <original>SDLRNQVYLEDGLDPFPGEGRVVGRQLMHKALDRVEEHP</original>
    <variation>ISCSSNHTFGDFEGSGDTQPPQTPPILRGSRCTPWGTPV</variation>
    <location>
        <begin position="286"/>
        <end position="324"/>
    </location>
</feature>
<feature type="splice variant" id="VSP_024777" description="In isoform 6 and isoform 7." evidence="12 14">
    <location>
        <begin position="325"/>
        <end position="520"/>
    </location>
</feature>
<feature type="sequence variant" id="VAR_031860" description="In dbSNP:rs6695966.">
    <original>E</original>
    <variation>G</variation>
    <location>
        <position position="165"/>
    </location>
</feature>
<feature type="sequence variant" id="VAR_031861" description="In dbSNP:rs4332350." evidence="7 9">
    <original>L</original>
    <variation>R</variation>
    <location>
        <position position="312"/>
    </location>
</feature>
<feature type="sequence variant" id="VAR_031862" evidence="6">
    <original>A</original>
    <variation>V</variation>
    <location>
        <position position="474"/>
    </location>
</feature>
<feature type="sequence variant" id="VAR_031863" evidence="8">
    <original>C</original>
    <variation>CPGPGPGPS</variation>
    <location>
        <position position="486"/>
    </location>
</feature>
<feature type="sequence variant" id="VAR_031864" evidence="7 9">
    <location>
        <begin position="487"/>
        <end position="494"/>
    </location>
</feature>
<feature type="sequence variant" id="VAR_031865">
    <location>
        <begin position="488"/>
        <end position="502"/>
    </location>
</feature>
<feature type="sequence variant" id="VAR_052690" description="In dbSNP:rs1134584." evidence="7 9">
    <original>P</original>
    <variation>S</variation>
    <location>
        <position position="509"/>
    </location>
</feature>
<feature type="sequence conflict" description="In Ref. 2; CAH56155." evidence="16" ref="2">
    <original>E</original>
    <variation>G</variation>
    <location>
        <position position="19"/>
    </location>
</feature>
<feature type="sequence conflict" description="In Ref. 4; BAC05024." evidence="16" ref="4">
    <original>K</original>
    <variation>M</variation>
    <location>
        <position position="103"/>
    </location>
</feature>
<feature type="sequence conflict" description="In Ref. 4; BAC05024." evidence="16" ref="4">
    <original>N</original>
    <variation>D</variation>
    <location>
        <position position="240"/>
    </location>
</feature>
<feature type="sequence conflict" description="In Ref. 5; AAQ15261." evidence="16" ref="5">
    <original>V</original>
    <variation>L</variation>
    <location>
        <position position="320"/>
    </location>
</feature>
<feature type="sequence conflict" description="In Ref. 2; AAM74202." evidence="16" ref="2">
    <original>S</original>
    <variation>L</variation>
    <location>
        <position position="388"/>
    </location>
</feature>
<feature type="sequence conflict" description="In Ref. 3; BAC04307." evidence="16" ref="3">
    <original>N</original>
    <variation>D</variation>
    <location>
        <position position="418"/>
    </location>
</feature>
<name>UBX11_HUMAN</name>
<sequence length="520" mass="57373">MSSPLASLSKTRKVPLPSEPMNPGRRGIRIYGDEDEVDMLSDGCGSEEKISVPSCYGGIGAPVSRQVPASHDSELMAFMTRKLWDLEQQVKAQTDEILSKDQKIAALEDLVQTLRPHPAEATLQRQEELETMCVQLQRQVREMERFLSDYGLQWVGEPMDQEDSESKTVSEHGERDWMTAKKFWKPGDSLAPPEVDFDRLLASLQDLSELVVEGDTQVTPVPGGARLRTLEPIPLKLYRNGIMMFDGPFQPFYDPSTQRCLRDILDGFFPSELQRLYPNGVPFKVSDLRNQVYLEDGLDPFPGEGRVVGRQLMHKALDRVEEHPGSRMTAEKFLNRLPKFVIRQGEVIDIRGPIRDTLQNCCPLPARIQEIVVETPTLAAERERSQESPNTPAPPLSMLRIKSENGEQAFLLMMQPDNTIGDVRALLAQARVMDASAFEIFSTFPPTLYQDDTLTLQAAGLVPKAALLLRARRAPKSSLKFSPGPCPGPGPGPSPGPGPGPSPGPGPGPSPCPGPSPSPQ</sequence>
<protein>
    <recommendedName>
        <fullName>UBX domain-containing protein 11</fullName>
    </recommendedName>
    <alternativeName>
        <fullName>Colorectal tumor-associated antigen COA-1</fullName>
    </alternativeName>
    <alternativeName>
        <fullName>Socius</fullName>
    </alternativeName>
    <alternativeName>
        <fullName>UBX domain-containing protein 5</fullName>
    </alternativeName>
</protein>